<reference key="1">
    <citation type="submission" date="2009-03" db="EMBL/GenBank/DDBJ databases">
        <title>Brucella melitensis ATCC 23457 whole genome shotgun sequencing project.</title>
        <authorList>
            <person name="Setubal J.C."/>
            <person name="Boyle S."/>
            <person name="Crasta O.R."/>
            <person name="Gillespie J.J."/>
            <person name="Kenyon R.W."/>
            <person name="Lu J."/>
            <person name="Mane S."/>
            <person name="Nagrani S."/>
            <person name="Shallom J.M."/>
            <person name="Shallom S."/>
            <person name="Shukla M."/>
            <person name="Snyder E.E."/>
            <person name="Sobral B.W."/>
            <person name="Wattam A.R."/>
            <person name="Will R."/>
            <person name="Williams K."/>
            <person name="Yoo H."/>
            <person name="Munk C."/>
            <person name="Tapia R."/>
            <person name="Han C."/>
            <person name="Detter J.C."/>
            <person name="Bruce D."/>
            <person name="Brettin T.S."/>
        </authorList>
    </citation>
    <scope>NUCLEOTIDE SEQUENCE [LARGE SCALE GENOMIC DNA]</scope>
    <source>
        <strain>ATCC 23457</strain>
    </source>
</reference>
<proteinExistence type="inferred from homology"/>
<accession>C0RJJ0</accession>
<evidence type="ECO:0000255" key="1">
    <source>
        <dbReference type="HAMAP-Rule" id="MF_01326"/>
    </source>
</evidence>
<evidence type="ECO:0000305" key="2"/>
<feature type="chain" id="PRO_1000165931" description="Large ribosomal subunit protein uL24">
    <location>
        <begin position="1"/>
        <end position="103"/>
    </location>
</feature>
<dbReference type="EMBL" id="CP001488">
    <property type="protein sequence ID" value="ACO00998.1"/>
    <property type="molecule type" value="Genomic_DNA"/>
</dbReference>
<dbReference type="RefSeq" id="WP_002964351.1">
    <property type="nucleotide sequence ID" value="NC_012441.1"/>
</dbReference>
<dbReference type="SMR" id="C0RJJ0"/>
<dbReference type="GeneID" id="97533535"/>
<dbReference type="KEGG" id="bmi:BMEA_A1267"/>
<dbReference type="HOGENOM" id="CLU_093315_2_2_5"/>
<dbReference type="Proteomes" id="UP000001748">
    <property type="component" value="Chromosome I"/>
</dbReference>
<dbReference type="GO" id="GO:1990904">
    <property type="term" value="C:ribonucleoprotein complex"/>
    <property type="evidence" value="ECO:0007669"/>
    <property type="project" value="UniProtKB-KW"/>
</dbReference>
<dbReference type="GO" id="GO:0005840">
    <property type="term" value="C:ribosome"/>
    <property type="evidence" value="ECO:0007669"/>
    <property type="project" value="UniProtKB-KW"/>
</dbReference>
<dbReference type="GO" id="GO:0019843">
    <property type="term" value="F:rRNA binding"/>
    <property type="evidence" value="ECO:0007669"/>
    <property type="project" value="UniProtKB-UniRule"/>
</dbReference>
<dbReference type="GO" id="GO:0003735">
    <property type="term" value="F:structural constituent of ribosome"/>
    <property type="evidence" value="ECO:0007669"/>
    <property type="project" value="InterPro"/>
</dbReference>
<dbReference type="GO" id="GO:0006412">
    <property type="term" value="P:translation"/>
    <property type="evidence" value="ECO:0007669"/>
    <property type="project" value="UniProtKB-UniRule"/>
</dbReference>
<dbReference type="CDD" id="cd06089">
    <property type="entry name" value="KOW_RPL26"/>
    <property type="match status" value="1"/>
</dbReference>
<dbReference type="FunFam" id="2.30.30.30:FF:000004">
    <property type="entry name" value="50S ribosomal protein L24"/>
    <property type="match status" value="1"/>
</dbReference>
<dbReference type="Gene3D" id="2.30.30.30">
    <property type="match status" value="1"/>
</dbReference>
<dbReference type="HAMAP" id="MF_01326_B">
    <property type="entry name" value="Ribosomal_uL24_B"/>
    <property type="match status" value="1"/>
</dbReference>
<dbReference type="InterPro" id="IPR005824">
    <property type="entry name" value="KOW"/>
</dbReference>
<dbReference type="InterPro" id="IPR014722">
    <property type="entry name" value="Rib_uL2_dom2"/>
</dbReference>
<dbReference type="InterPro" id="IPR003256">
    <property type="entry name" value="Ribosomal_uL24"/>
</dbReference>
<dbReference type="InterPro" id="IPR005825">
    <property type="entry name" value="Ribosomal_uL24_CS"/>
</dbReference>
<dbReference type="InterPro" id="IPR041988">
    <property type="entry name" value="Ribosomal_uL24_KOW"/>
</dbReference>
<dbReference type="InterPro" id="IPR008991">
    <property type="entry name" value="Translation_prot_SH3-like_sf"/>
</dbReference>
<dbReference type="NCBIfam" id="TIGR01079">
    <property type="entry name" value="rplX_bact"/>
    <property type="match status" value="1"/>
</dbReference>
<dbReference type="PANTHER" id="PTHR12903">
    <property type="entry name" value="MITOCHONDRIAL RIBOSOMAL PROTEIN L24"/>
    <property type="match status" value="1"/>
</dbReference>
<dbReference type="Pfam" id="PF00467">
    <property type="entry name" value="KOW"/>
    <property type="match status" value="1"/>
</dbReference>
<dbReference type="Pfam" id="PF17136">
    <property type="entry name" value="ribosomal_L24"/>
    <property type="match status" value="1"/>
</dbReference>
<dbReference type="SMART" id="SM00739">
    <property type="entry name" value="KOW"/>
    <property type="match status" value="1"/>
</dbReference>
<dbReference type="SUPFAM" id="SSF50104">
    <property type="entry name" value="Translation proteins SH3-like domain"/>
    <property type="match status" value="1"/>
</dbReference>
<dbReference type="PROSITE" id="PS01108">
    <property type="entry name" value="RIBOSOMAL_L24"/>
    <property type="match status" value="1"/>
</dbReference>
<gene>
    <name evidence="1" type="primary">rplX</name>
    <name type="ordered locus">BMEA_A1267</name>
</gene>
<keyword id="KW-0687">Ribonucleoprotein</keyword>
<keyword id="KW-0689">Ribosomal protein</keyword>
<keyword id="KW-0694">RNA-binding</keyword>
<keyword id="KW-0699">rRNA-binding</keyword>
<organism>
    <name type="scientific">Brucella melitensis biotype 2 (strain ATCC 23457)</name>
    <dbReference type="NCBI Taxonomy" id="546272"/>
    <lineage>
        <taxon>Bacteria</taxon>
        <taxon>Pseudomonadati</taxon>
        <taxon>Pseudomonadota</taxon>
        <taxon>Alphaproteobacteria</taxon>
        <taxon>Hyphomicrobiales</taxon>
        <taxon>Brucellaceae</taxon>
        <taxon>Brucella/Ochrobactrum group</taxon>
        <taxon>Brucella</taxon>
    </lineage>
</organism>
<name>RL24_BRUMB</name>
<sequence>MQKIRKGDSVVVLSGKDKGRKGEVLKVMPKDEQALVSGINIVKRHQRQTQTQEAGIISKEAPIHLSNLAIADPKDGKPTRVGFRVEDGKKVRVAKRSGALIDG</sequence>
<protein>
    <recommendedName>
        <fullName evidence="1">Large ribosomal subunit protein uL24</fullName>
    </recommendedName>
    <alternativeName>
        <fullName evidence="2">50S ribosomal protein L24</fullName>
    </alternativeName>
</protein>
<comment type="function">
    <text evidence="1">One of two assembly initiator proteins, it binds directly to the 5'-end of the 23S rRNA, where it nucleates assembly of the 50S subunit.</text>
</comment>
<comment type="function">
    <text evidence="1">One of the proteins that surrounds the polypeptide exit tunnel on the outside of the subunit.</text>
</comment>
<comment type="subunit">
    <text evidence="1">Part of the 50S ribosomal subunit.</text>
</comment>
<comment type="similarity">
    <text evidence="1">Belongs to the universal ribosomal protein uL24 family.</text>
</comment>